<protein>
    <recommendedName>
        <fullName evidence="1">Glycerol-3-phosphate dehydrogenase [NAD(P)+]</fullName>
        <ecNumber evidence="1">1.1.1.94</ecNumber>
    </recommendedName>
    <alternativeName>
        <fullName evidence="1">NAD(P)(+)-dependent glycerol-3-phosphate dehydrogenase</fullName>
    </alternativeName>
    <alternativeName>
        <fullName evidence="1">NAD(P)H-dependent dihydroxyacetone-phosphate reductase</fullName>
    </alternativeName>
</protein>
<gene>
    <name evidence="1" type="primary">gpsA</name>
    <name type="ordered locus">LIC_13145</name>
</gene>
<organism>
    <name type="scientific">Leptospira interrogans serogroup Icterohaemorrhagiae serovar copenhageni (strain Fiocruz L1-130)</name>
    <dbReference type="NCBI Taxonomy" id="267671"/>
    <lineage>
        <taxon>Bacteria</taxon>
        <taxon>Pseudomonadati</taxon>
        <taxon>Spirochaetota</taxon>
        <taxon>Spirochaetia</taxon>
        <taxon>Leptospirales</taxon>
        <taxon>Leptospiraceae</taxon>
        <taxon>Leptospira</taxon>
    </lineage>
</organism>
<feature type="chain" id="PRO_0000137981" description="Glycerol-3-phosphate dehydrogenase [NAD(P)+]">
    <location>
        <begin position="1"/>
        <end position="335"/>
    </location>
</feature>
<feature type="active site" description="Proton acceptor" evidence="1">
    <location>
        <position position="191"/>
    </location>
</feature>
<feature type="binding site" evidence="1">
    <location>
        <position position="10"/>
    </location>
    <ligand>
        <name>NADPH</name>
        <dbReference type="ChEBI" id="CHEBI:57783"/>
    </ligand>
</feature>
<feature type="binding site" evidence="1">
    <location>
        <position position="11"/>
    </location>
    <ligand>
        <name>NADPH</name>
        <dbReference type="ChEBI" id="CHEBI:57783"/>
    </ligand>
</feature>
<feature type="binding site" evidence="1">
    <location>
        <position position="31"/>
    </location>
    <ligand>
        <name>NADPH</name>
        <dbReference type="ChEBI" id="CHEBI:57783"/>
    </ligand>
</feature>
<feature type="binding site" evidence="1">
    <location>
        <position position="105"/>
    </location>
    <ligand>
        <name>NADPH</name>
        <dbReference type="ChEBI" id="CHEBI:57783"/>
    </ligand>
</feature>
<feature type="binding site" evidence="1">
    <location>
        <position position="105"/>
    </location>
    <ligand>
        <name>sn-glycerol 3-phosphate</name>
        <dbReference type="ChEBI" id="CHEBI:57597"/>
    </ligand>
</feature>
<feature type="binding site" evidence="1">
    <location>
        <position position="136"/>
    </location>
    <ligand>
        <name>sn-glycerol 3-phosphate</name>
        <dbReference type="ChEBI" id="CHEBI:57597"/>
    </ligand>
</feature>
<feature type="binding site" evidence="1">
    <location>
        <position position="138"/>
    </location>
    <ligand>
        <name>sn-glycerol 3-phosphate</name>
        <dbReference type="ChEBI" id="CHEBI:57597"/>
    </ligand>
</feature>
<feature type="binding site" evidence="1">
    <location>
        <position position="140"/>
    </location>
    <ligand>
        <name>NADPH</name>
        <dbReference type="ChEBI" id="CHEBI:57783"/>
    </ligand>
</feature>
<feature type="binding site" evidence="1">
    <location>
        <position position="191"/>
    </location>
    <ligand>
        <name>sn-glycerol 3-phosphate</name>
        <dbReference type="ChEBI" id="CHEBI:57597"/>
    </ligand>
</feature>
<feature type="binding site" evidence="1">
    <location>
        <position position="244"/>
    </location>
    <ligand>
        <name>sn-glycerol 3-phosphate</name>
        <dbReference type="ChEBI" id="CHEBI:57597"/>
    </ligand>
</feature>
<feature type="binding site" evidence="1">
    <location>
        <position position="254"/>
    </location>
    <ligand>
        <name>sn-glycerol 3-phosphate</name>
        <dbReference type="ChEBI" id="CHEBI:57597"/>
    </ligand>
</feature>
<feature type="binding site" evidence="1">
    <location>
        <position position="255"/>
    </location>
    <ligand>
        <name>NADPH</name>
        <dbReference type="ChEBI" id="CHEBI:57783"/>
    </ligand>
</feature>
<feature type="binding site" evidence="1">
    <location>
        <position position="255"/>
    </location>
    <ligand>
        <name>sn-glycerol 3-phosphate</name>
        <dbReference type="ChEBI" id="CHEBI:57597"/>
    </ligand>
</feature>
<feature type="binding site" evidence="1">
    <location>
        <position position="256"/>
    </location>
    <ligand>
        <name>sn-glycerol 3-phosphate</name>
        <dbReference type="ChEBI" id="CHEBI:57597"/>
    </ligand>
</feature>
<feature type="binding site" evidence="1">
    <location>
        <position position="279"/>
    </location>
    <ligand>
        <name>NADPH</name>
        <dbReference type="ChEBI" id="CHEBI:57783"/>
    </ligand>
</feature>
<feature type="binding site" evidence="1">
    <location>
        <position position="281"/>
    </location>
    <ligand>
        <name>NADPH</name>
        <dbReference type="ChEBI" id="CHEBI:57783"/>
    </ligand>
</feature>
<keyword id="KW-0963">Cytoplasm</keyword>
<keyword id="KW-0444">Lipid biosynthesis</keyword>
<keyword id="KW-0443">Lipid metabolism</keyword>
<keyword id="KW-0520">NAD</keyword>
<keyword id="KW-0521">NADP</keyword>
<keyword id="KW-0547">Nucleotide-binding</keyword>
<keyword id="KW-0560">Oxidoreductase</keyword>
<keyword id="KW-0594">Phospholipid biosynthesis</keyword>
<keyword id="KW-1208">Phospholipid metabolism</keyword>
<sequence>MKIGVIGSGSFGTALGSLLADKGYEVTLWCRNDSQVESINRNHINNKHLPNFTLPEKLTASKDLRNVVQGKDMIVSSPPSHALSEVLREIKEYLPEKVPIVSASKGIENGTLRLVSEIFESELPEKYHSYLSYLSGPSFAKEIIQKVPTIVSIASKNETTARKVQEIFSFLYFRTYWTPDVIGVEVGGSLKNVIALAAGVSDGLGFGQNTRAALITRGLNEITKIGLKLGADPMTFLGPSGMGDLILTCCGEQSRNRTVGFRLGKGETLEQILSSMNEVAEGVKTTQSAYELSQKLGIEMAITNEVYKMLYEGKNPREVVKDLMKRDLKREGVSV</sequence>
<name>GPDA_LEPIC</name>
<reference key="1">
    <citation type="journal article" date="2004" name="J. Bacteriol.">
        <title>Comparative genomics of two Leptospira interrogans serovars reveals novel insights into physiology and pathogenesis.</title>
        <authorList>
            <person name="Nascimento A.L.T.O."/>
            <person name="Ko A.I."/>
            <person name="Martins E.A.L."/>
            <person name="Monteiro-Vitorello C.B."/>
            <person name="Ho P.L."/>
            <person name="Haake D.A."/>
            <person name="Verjovski-Almeida S."/>
            <person name="Hartskeerl R.A."/>
            <person name="Marques M.V."/>
            <person name="Oliveira M.C."/>
            <person name="Menck C.F.M."/>
            <person name="Leite L.C.C."/>
            <person name="Carrer H."/>
            <person name="Coutinho L.L."/>
            <person name="Degrave W.M."/>
            <person name="Dellagostin O.A."/>
            <person name="El-Dorry H."/>
            <person name="Ferro E.S."/>
            <person name="Ferro M.I.T."/>
            <person name="Furlan L.R."/>
            <person name="Gamberini M."/>
            <person name="Giglioti E.A."/>
            <person name="Goes-Neto A."/>
            <person name="Goldman G.H."/>
            <person name="Goldman M.H.S."/>
            <person name="Harakava R."/>
            <person name="Jeronimo S.M.B."/>
            <person name="Junqueira-de-Azevedo I.L.M."/>
            <person name="Kimura E.T."/>
            <person name="Kuramae E.E."/>
            <person name="Lemos E.G.M."/>
            <person name="Lemos M.V.F."/>
            <person name="Marino C.L."/>
            <person name="Nunes L.R."/>
            <person name="de Oliveira R.C."/>
            <person name="Pereira G.G."/>
            <person name="Reis M.S."/>
            <person name="Schriefer A."/>
            <person name="Siqueira W.J."/>
            <person name="Sommer P."/>
            <person name="Tsai S.M."/>
            <person name="Simpson A.J.G."/>
            <person name="Ferro J.A."/>
            <person name="Camargo L.E.A."/>
            <person name="Kitajima J.P."/>
            <person name="Setubal J.C."/>
            <person name="Van Sluys M.A."/>
        </authorList>
    </citation>
    <scope>NUCLEOTIDE SEQUENCE [LARGE SCALE GENOMIC DNA]</scope>
    <source>
        <strain>Fiocruz L1-130</strain>
    </source>
</reference>
<evidence type="ECO:0000255" key="1">
    <source>
        <dbReference type="HAMAP-Rule" id="MF_00394"/>
    </source>
</evidence>
<dbReference type="EC" id="1.1.1.94" evidence="1"/>
<dbReference type="EMBL" id="AE016823">
    <property type="protein sequence ID" value="AAS71690.1"/>
    <property type="molecule type" value="Genomic_DNA"/>
</dbReference>
<dbReference type="RefSeq" id="WP_000690432.1">
    <property type="nucleotide sequence ID" value="NC_005823.1"/>
</dbReference>
<dbReference type="SMR" id="P61742"/>
<dbReference type="KEGG" id="lic:LIC_13145"/>
<dbReference type="HOGENOM" id="CLU_033449_0_2_12"/>
<dbReference type="UniPathway" id="UPA00940"/>
<dbReference type="Proteomes" id="UP000007037">
    <property type="component" value="Chromosome I"/>
</dbReference>
<dbReference type="GO" id="GO:0005829">
    <property type="term" value="C:cytosol"/>
    <property type="evidence" value="ECO:0007669"/>
    <property type="project" value="TreeGrafter"/>
</dbReference>
<dbReference type="GO" id="GO:0047952">
    <property type="term" value="F:glycerol-3-phosphate dehydrogenase [NAD(P)+] activity"/>
    <property type="evidence" value="ECO:0007669"/>
    <property type="project" value="UniProtKB-UniRule"/>
</dbReference>
<dbReference type="GO" id="GO:0051287">
    <property type="term" value="F:NAD binding"/>
    <property type="evidence" value="ECO:0007669"/>
    <property type="project" value="InterPro"/>
</dbReference>
<dbReference type="GO" id="GO:0005975">
    <property type="term" value="P:carbohydrate metabolic process"/>
    <property type="evidence" value="ECO:0007669"/>
    <property type="project" value="InterPro"/>
</dbReference>
<dbReference type="GO" id="GO:0046167">
    <property type="term" value="P:glycerol-3-phosphate biosynthetic process"/>
    <property type="evidence" value="ECO:0007669"/>
    <property type="project" value="UniProtKB-UniRule"/>
</dbReference>
<dbReference type="GO" id="GO:0046168">
    <property type="term" value="P:glycerol-3-phosphate catabolic process"/>
    <property type="evidence" value="ECO:0007669"/>
    <property type="project" value="InterPro"/>
</dbReference>
<dbReference type="GO" id="GO:0006650">
    <property type="term" value="P:glycerophospholipid metabolic process"/>
    <property type="evidence" value="ECO:0007669"/>
    <property type="project" value="UniProtKB-UniRule"/>
</dbReference>
<dbReference type="GO" id="GO:0008654">
    <property type="term" value="P:phospholipid biosynthetic process"/>
    <property type="evidence" value="ECO:0007669"/>
    <property type="project" value="UniProtKB-KW"/>
</dbReference>
<dbReference type="FunFam" id="1.10.1040.10:FF:000001">
    <property type="entry name" value="Glycerol-3-phosphate dehydrogenase [NAD(P)+]"/>
    <property type="match status" value="1"/>
</dbReference>
<dbReference type="FunFam" id="3.40.50.720:FF:000019">
    <property type="entry name" value="Glycerol-3-phosphate dehydrogenase [NAD(P)+]"/>
    <property type="match status" value="1"/>
</dbReference>
<dbReference type="Gene3D" id="1.10.1040.10">
    <property type="entry name" value="N-(1-d-carboxylethyl)-l-norvaline Dehydrogenase, domain 2"/>
    <property type="match status" value="1"/>
</dbReference>
<dbReference type="Gene3D" id="3.40.50.720">
    <property type="entry name" value="NAD(P)-binding Rossmann-like Domain"/>
    <property type="match status" value="1"/>
</dbReference>
<dbReference type="HAMAP" id="MF_00394">
    <property type="entry name" value="NAD_Glyc3P_dehydrog"/>
    <property type="match status" value="1"/>
</dbReference>
<dbReference type="InterPro" id="IPR008927">
    <property type="entry name" value="6-PGluconate_DH-like_C_sf"/>
</dbReference>
<dbReference type="InterPro" id="IPR013328">
    <property type="entry name" value="6PGD_dom2"/>
</dbReference>
<dbReference type="InterPro" id="IPR006168">
    <property type="entry name" value="G3P_DH_NAD-dep"/>
</dbReference>
<dbReference type="InterPro" id="IPR006109">
    <property type="entry name" value="G3P_DH_NAD-dep_C"/>
</dbReference>
<dbReference type="InterPro" id="IPR011128">
    <property type="entry name" value="G3P_DH_NAD-dep_N"/>
</dbReference>
<dbReference type="InterPro" id="IPR036291">
    <property type="entry name" value="NAD(P)-bd_dom_sf"/>
</dbReference>
<dbReference type="NCBIfam" id="NF000940">
    <property type="entry name" value="PRK00094.1-2"/>
    <property type="match status" value="1"/>
</dbReference>
<dbReference type="NCBIfam" id="NF000941">
    <property type="entry name" value="PRK00094.1-3"/>
    <property type="match status" value="1"/>
</dbReference>
<dbReference type="NCBIfam" id="NF000942">
    <property type="entry name" value="PRK00094.1-4"/>
    <property type="match status" value="1"/>
</dbReference>
<dbReference type="PANTHER" id="PTHR11728">
    <property type="entry name" value="GLYCEROL-3-PHOSPHATE DEHYDROGENASE"/>
    <property type="match status" value="1"/>
</dbReference>
<dbReference type="PANTHER" id="PTHR11728:SF1">
    <property type="entry name" value="GLYCEROL-3-PHOSPHATE DEHYDROGENASE [NAD(+)] 2, CHLOROPLASTIC"/>
    <property type="match status" value="1"/>
</dbReference>
<dbReference type="Pfam" id="PF07479">
    <property type="entry name" value="NAD_Gly3P_dh_C"/>
    <property type="match status" value="1"/>
</dbReference>
<dbReference type="Pfam" id="PF01210">
    <property type="entry name" value="NAD_Gly3P_dh_N"/>
    <property type="match status" value="1"/>
</dbReference>
<dbReference type="PIRSF" id="PIRSF000114">
    <property type="entry name" value="Glycerol-3-P_dh"/>
    <property type="match status" value="1"/>
</dbReference>
<dbReference type="PRINTS" id="PR00077">
    <property type="entry name" value="GPDHDRGNASE"/>
</dbReference>
<dbReference type="SUPFAM" id="SSF48179">
    <property type="entry name" value="6-phosphogluconate dehydrogenase C-terminal domain-like"/>
    <property type="match status" value="1"/>
</dbReference>
<dbReference type="SUPFAM" id="SSF51735">
    <property type="entry name" value="NAD(P)-binding Rossmann-fold domains"/>
    <property type="match status" value="1"/>
</dbReference>
<dbReference type="PROSITE" id="PS00957">
    <property type="entry name" value="NAD_G3PDH"/>
    <property type="match status" value="1"/>
</dbReference>
<proteinExistence type="inferred from homology"/>
<comment type="function">
    <text evidence="1">Catalyzes the reduction of the glycolytic intermediate dihydroxyacetone phosphate (DHAP) to sn-glycerol 3-phosphate (G3P), the key precursor for phospholipid synthesis.</text>
</comment>
<comment type="catalytic activity">
    <reaction evidence="1">
        <text>sn-glycerol 3-phosphate + NAD(+) = dihydroxyacetone phosphate + NADH + H(+)</text>
        <dbReference type="Rhea" id="RHEA:11092"/>
        <dbReference type="ChEBI" id="CHEBI:15378"/>
        <dbReference type="ChEBI" id="CHEBI:57540"/>
        <dbReference type="ChEBI" id="CHEBI:57597"/>
        <dbReference type="ChEBI" id="CHEBI:57642"/>
        <dbReference type="ChEBI" id="CHEBI:57945"/>
        <dbReference type="EC" id="1.1.1.94"/>
    </reaction>
    <physiologicalReaction direction="right-to-left" evidence="1">
        <dbReference type="Rhea" id="RHEA:11094"/>
    </physiologicalReaction>
</comment>
<comment type="catalytic activity">
    <reaction evidence="1">
        <text>sn-glycerol 3-phosphate + NADP(+) = dihydroxyacetone phosphate + NADPH + H(+)</text>
        <dbReference type="Rhea" id="RHEA:11096"/>
        <dbReference type="ChEBI" id="CHEBI:15378"/>
        <dbReference type="ChEBI" id="CHEBI:57597"/>
        <dbReference type="ChEBI" id="CHEBI:57642"/>
        <dbReference type="ChEBI" id="CHEBI:57783"/>
        <dbReference type="ChEBI" id="CHEBI:58349"/>
        <dbReference type="EC" id="1.1.1.94"/>
    </reaction>
    <physiologicalReaction direction="right-to-left" evidence="1">
        <dbReference type="Rhea" id="RHEA:11098"/>
    </physiologicalReaction>
</comment>
<comment type="pathway">
    <text evidence="1">Membrane lipid metabolism; glycerophospholipid metabolism.</text>
</comment>
<comment type="subcellular location">
    <subcellularLocation>
        <location evidence="1">Cytoplasm</location>
    </subcellularLocation>
</comment>
<comment type="similarity">
    <text evidence="1">Belongs to the NAD-dependent glycerol-3-phosphate dehydrogenase family.</text>
</comment>
<accession>P61742</accession>